<protein>
    <recommendedName>
        <fullName>Uroporphyrinogen decarboxylase 1, chloroplastic</fullName>
        <shortName>UPD1</shortName>
        <shortName>URO-D1</shortName>
        <ecNumber>4.1.1.37</ecNumber>
    </recommendedName>
</protein>
<comment type="function">
    <text evidence="1">Catalyzes the decarboxylation of four acetate groups of uroporphyrinogen-III to yield coproporphyrinogen-III.</text>
</comment>
<comment type="catalytic activity">
    <reaction>
        <text>uroporphyrinogen III + 4 H(+) = coproporphyrinogen III + 4 CO2</text>
        <dbReference type="Rhea" id="RHEA:19865"/>
        <dbReference type="ChEBI" id="CHEBI:15378"/>
        <dbReference type="ChEBI" id="CHEBI:16526"/>
        <dbReference type="ChEBI" id="CHEBI:57308"/>
        <dbReference type="ChEBI" id="CHEBI:57309"/>
        <dbReference type="EC" id="4.1.1.37"/>
    </reaction>
</comment>
<comment type="pathway">
    <text>Porphyrin-containing compound metabolism; protoporphyrin-IX biosynthesis; coproporphyrinogen-III from 5-aminolevulinate: step 4/4.</text>
</comment>
<comment type="subunit">
    <text evidence="1">Homodimer.</text>
</comment>
<comment type="subcellular location">
    <subcellularLocation>
        <location evidence="3">Plastid</location>
        <location evidence="3">Chloroplast</location>
    </subcellularLocation>
</comment>
<comment type="similarity">
    <text evidence="3">Belongs to the uroporphyrinogen decarboxylase family.</text>
</comment>
<feature type="transit peptide" description="Chloroplast" evidence="2">
    <location>
        <begin position="1"/>
        <end position="50"/>
    </location>
</feature>
<feature type="chain" id="PRO_0000376072" description="Uroporphyrinogen decarboxylase 1, chloroplastic">
    <location>
        <begin position="51"/>
        <end position="402"/>
    </location>
</feature>
<feature type="binding site" evidence="1">
    <location>
        <begin position="67"/>
        <end position="71"/>
    </location>
    <ligand>
        <name>substrate</name>
    </ligand>
</feature>
<feature type="binding site" evidence="1">
    <location>
        <position position="86"/>
    </location>
    <ligand>
        <name>substrate</name>
    </ligand>
</feature>
<feature type="binding site" evidence="1">
    <location>
        <position position="116"/>
    </location>
    <ligand>
        <name>substrate</name>
    </ligand>
</feature>
<feature type="binding site" evidence="1">
    <location>
        <position position="117"/>
    </location>
    <ligand>
        <name>substrate</name>
    </ligand>
</feature>
<feature type="binding site" evidence="1">
    <location>
        <position position="193"/>
    </location>
    <ligand>
        <name>substrate</name>
    </ligand>
</feature>
<feature type="binding site" evidence="1">
    <location>
        <position position="248"/>
    </location>
    <ligand>
        <name>substrate</name>
    </ligand>
</feature>
<feature type="binding site" evidence="1">
    <location>
        <position position="363"/>
    </location>
    <ligand>
        <name>substrate</name>
    </ligand>
</feature>
<feature type="site" description="Transition state stabilizer" evidence="1">
    <location>
        <position position="117"/>
    </location>
</feature>
<name>DCUP1_ORYSJ</name>
<gene>
    <name type="ordered locus">Os01g0622300</name>
    <name type="ordered locus">LOC_Os01g43390</name>
    <name type="ORF">OsJ_02650</name>
    <name type="ORF">P0501G01.7</name>
</gene>
<accession>Q9AXB0</accession>
<accession>A0A0P0V5F3</accession>
<organism>
    <name type="scientific">Oryza sativa subsp. japonica</name>
    <name type="common">Rice</name>
    <dbReference type="NCBI Taxonomy" id="39947"/>
    <lineage>
        <taxon>Eukaryota</taxon>
        <taxon>Viridiplantae</taxon>
        <taxon>Streptophyta</taxon>
        <taxon>Embryophyta</taxon>
        <taxon>Tracheophyta</taxon>
        <taxon>Spermatophyta</taxon>
        <taxon>Magnoliopsida</taxon>
        <taxon>Liliopsida</taxon>
        <taxon>Poales</taxon>
        <taxon>Poaceae</taxon>
        <taxon>BOP clade</taxon>
        <taxon>Oryzoideae</taxon>
        <taxon>Oryzeae</taxon>
        <taxon>Oryzinae</taxon>
        <taxon>Oryza</taxon>
        <taxon>Oryza sativa</taxon>
    </lineage>
</organism>
<sequence length="402" mass="43982">MISATATAAFLAAAPASSSSCTTHRRRSGLPAISASLATASSTEEPLLVRAARGEDGLPRPPAWMMRQAGRYMAEYQALAKRHPSFRERSETTELIVEITLQPWRAFAPDGVILFSDILTPLPAIGVPFDISDSKGPVIQSPVRSEEQVRELTPIDFEKLRFVGESLKILRTEIDGQAALLGFVGAPWTIATYVVEGGMTNTYTNIKSMCHTAPNVLRGLLSHLADAISEYIIYQVNSGAQCIQIFDSWGGQLPPHVWEQWSKPYIKQIVNKIKIECPNVPLVLYINGNGGLLERMTDTGVDVIGLDWTVDMADGRRRLGNKISVQGNVDPAFLFSPLPVLTDEIHRVVKSAGPKGHILNLGHGVLVKTPEEAVAHFFDVTRSLRYDTLFQGCVTEVLEPVA</sequence>
<keyword id="KW-0149">Chlorophyll biosynthesis</keyword>
<keyword id="KW-0150">Chloroplast</keyword>
<keyword id="KW-0210">Decarboxylase</keyword>
<keyword id="KW-0456">Lyase</keyword>
<keyword id="KW-0934">Plastid</keyword>
<keyword id="KW-0627">Porphyrin biosynthesis</keyword>
<keyword id="KW-1185">Reference proteome</keyword>
<keyword id="KW-0809">Transit peptide</keyword>
<dbReference type="EC" id="4.1.1.37"/>
<dbReference type="EMBL" id="AP002819">
    <property type="protein sequence ID" value="BAB21078.1"/>
    <property type="molecule type" value="Genomic_DNA"/>
</dbReference>
<dbReference type="EMBL" id="AP008207">
    <property type="protein sequence ID" value="BAF05524.1"/>
    <property type="molecule type" value="Genomic_DNA"/>
</dbReference>
<dbReference type="EMBL" id="AP014957">
    <property type="protein sequence ID" value="BAS73222.1"/>
    <property type="molecule type" value="Genomic_DNA"/>
</dbReference>
<dbReference type="EMBL" id="CM000138">
    <property type="protein sequence ID" value="EEE55007.1"/>
    <property type="molecule type" value="Genomic_DNA"/>
</dbReference>
<dbReference type="EMBL" id="AK106203">
    <property type="protein sequence ID" value="BAG97638.1"/>
    <property type="molecule type" value="mRNA"/>
</dbReference>
<dbReference type="RefSeq" id="XP_015611773.1">
    <property type="nucleotide sequence ID" value="XM_015756287.1"/>
</dbReference>
<dbReference type="SMR" id="Q9AXB0"/>
<dbReference type="FunCoup" id="Q9AXB0">
    <property type="interactions" value="2786"/>
</dbReference>
<dbReference type="STRING" id="39947.Q9AXB0"/>
<dbReference type="PaxDb" id="39947-Q9AXB0"/>
<dbReference type="EnsemblPlants" id="Os01t0622300-01">
    <property type="protein sequence ID" value="Os01t0622300-01"/>
    <property type="gene ID" value="Os01g0622300"/>
</dbReference>
<dbReference type="Gramene" id="Os01t0622300-01">
    <property type="protein sequence ID" value="Os01t0622300-01"/>
    <property type="gene ID" value="Os01g0622300"/>
</dbReference>
<dbReference type="KEGG" id="dosa:Os01g0622300"/>
<dbReference type="eggNOG" id="KOG2872">
    <property type="taxonomic scope" value="Eukaryota"/>
</dbReference>
<dbReference type="HOGENOM" id="CLU_040933_0_2_1"/>
<dbReference type="InParanoid" id="Q9AXB0"/>
<dbReference type="OMA" id="CAGQRGH"/>
<dbReference type="OrthoDB" id="339900at2759"/>
<dbReference type="UniPathway" id="UPA00251">
    <property type="reaction ID" value="UER00321"/>
</dbReference>
<dbReference type="Proteomes" id="UP000000763">
    <property type="component" value="Chromosome 1"/>
</dbReference>
<dbReference type="Proteomes" id="UP000007752">
    <property type="component" value="Chromosome 1"/>
</dbReference>
<dbReference type="Proteomes" id="UP000059680">
    <property type="component" value="Chromosome 1"/>
</dbReference>
<dbReference type="GO" id="GO:0009507">
    <property type="term" value="C:chloroplast"/>
    <property type="evidence" value="ECO:0007669"/>
    <property type="project" value="UniProtKB-SubCell"/>
</dbReference>
<dbReference type="GO" id="GO:0004853">
    <property type="term" value="F:uroporphyrinogen decarboxylase activity"/>
    <property type="evidence" value="ECO:0007669"/>
    <property type="project" value="UniProtKB-EC"/>
</dbReference>
<dbReference type="GO" id="GO:0015995">
    <property type="term" value="P:chlorophyll biosynthetic process"/>
    <property type="evidence" value="ECO:0007669"/>
    <property type="project" value="UniProtKB-KW"/>
</dbReference>
<dbReference type="GO" id="GO:0006782">
    <property type="term" value="P:protoporphyrinogen IX biosynthetic process"/>
    <property type="evidence" value="ECO:0007669"/>
    <property type="project" value="UniProtKB-UniPathway"/>
</dbReference>
<dbReference type="CDD" id="cd00717">
    <property type="entry name" value="URO-D"/>
    <property type="match status" value="1"/>
</dbReference>
<dbReference type="FunFam" id="3.20.20.210:FF:000006">
    <property type="entry name" value="Uroporphyrinogen decarboxylase"/>
    <property type="match status" value="1"/>
</dbReference>
<dbReference type="Gene3D" id="3.20.20.210">
    <property type="match status" value="1"/>
</dbReference>
<dbReference type="HAMAP" id="MF_00218">
    <property type="entry name" value="URO_D"/>
    <property type="match status" value="1"/>
</dbReference>
<dbReference type="InterPro" id="IPR038071">
    <property type="entry name" value="UROD/MetE-like_sf"/>
</dbReference>
<dbReference type="InterPro" id="IPR006361">
    <property type="entry name" value="Uroporphyrinogen_deCO2ase_HemE"/>
</dbReference>
<dbReference type="InterPro" id="IPR000257">
    <property type="entry name" value="Uroporphyrinogen_deCOase"/>
</dbReference>
<dbReference type="NCBIfam" id="TIGR01464">
    <property type="entry name" value="hemE"/>
    <property type="match status" value="1"/>
</dbReference>
<dbReference type="PANTHER" id="PTHR21091">
    <property type="entry name" value="METHYLTETRAHYDROFOLATE:HOMOCYSTEINE METHYLTRANSFERASE RELATED"/>
    <property type="match status" value="1"/>
</dbReference>
<dbReference type="PANTHER" id="PTHR21091:SF167">
    <property type="entry name" value="UROPORPHYRINOGEN DECARBOXYLASE 1, CHLOROPLASTIC"/>
    <property type="match status" value="1"/>
</dbReference>
<dbReference type="Pfam" id="PF01208">
    <property type="entry name" value="URO-D"/>
    <property type="match status" value="1"/>
</dbReference>
<dbReference type="SUPFAM" id="SSF51726">
    <property type="entry name" value="UROD/MetE-like"/>
    <property type="match status" value="1"/>
</dbReference>
<dbReference type="PROSITE" id="PS00906">
    <property type="entry name" value="UROD_1"/>
    <property type="match status" value="1"/>
</dbReference>
<dbReference type="PROSITE" id="PS00907">
    <property type="entry name" value="UROD_2"/>
    <property type="match status" value="1"/>
</dbReference>
<reference key="1">
    <citation type="journal article" date="2002" name="Nature">
        <title>The genome sequence and structure of rice chromosome 1.</title>
        <authorList>
            <person name="Sasaki T."/>
            <person name="Matsumoto T."/>
            <person name="Yamamoto K."/>
            <person name="Sakata K."/>
            <person name="Baba T."/>
            <person name="Katayose Y."/>
            <person name="Wu J."/>
            <person name="Niimura Y."/>
            <person name="Cheng Z."/>
            <person name="Nagamura Y."/>
            <person name="Antonio B.A."/>
            <person name="Kanamori H."/>
            <person name="Hosokawa S."/>
            <person name="Masukawa M."/>
            <person name="Arikawa K."/>
            <person name="Chiden Y."/>
            <person name="Hayashi M."/>
            <person name="Okamoto M."/>
            <person name="Ando T."/>
            <person name="Aoki H."/>
            <person name="Arita K."/>
            <person name="Hamada M."/>
            <person name="Harada C."/>
            <person name="Hijishita S."/>
            <person name="Honda M."/>
            <person name="Ichikawa Y."/>
            <person name="Idonuma A."/>
            <person name="Iijima M."/>
            <person name="Ikeda M."/>
            <person name="Ikeno M."/>
            <person name="Ito S."/>
            <person name="Ito T."/>
            <person name="Ito Y."/>
            <person name="Ito Y."/>
            <person name="Iwabuchi A."/>
            <person name="Kamiya K."/>
            <person name="Karasawa W."/>
            <person name="Katagiri S."/>
            <person name="Kikuta A."/>
            <person name="Kobayashi N."/>
            <person name="Kono I."/>
            <person name="Machita K."/>
            <person name="Maehara T."/>
            <person name="Mizuno H."/>
            <person name="Mizubayashi T."/>
            <person name="Mukai Y."/>
            <person name="Nagasaki H."/>
            <person name="Nakashima M."/>
            <person name="Nakama Y."/>
            <person name="Nakamichi Y."/>
            <person name="Nakamura M."/>
            <person name="Namiki N."/>
            <person name="Negishi M."/>
            <person name="Ohta I."/>
            <person name="Ono N."/>
            <person name="Saji S."/>
            <person name="Sakai K."/>
            <person name="Shibata M."/>
            <person name="Shimokawa T."/>
            <person name="Shomura A."/>
            <person name="Song J."/>
            <person name="Takazaki Y."/>
            <person name="Terasawa K."/>
            <person name="Tsuji K."/>
            <person name="Waki K."/>
            <person name="Yamagata H."/>
            <person name="Yamane H."/>
            <person name="Yoshiki S."/>
            <person name="Yoshihara R."/>
            <person name="Yukawa K."/>
            <person name="Zhong H."/>
            <person name="Iwama H."/>
            <person name="Endo T."/>
            <person name="Ito H."/>
            <person name="Hahn J.H."/>
            <person name="Kim H.-I."/>
            <person name="Eun M.-Y."/>
            <person name="Yano M."/>
            <person name="Jiang J."/>
            <person name="Gojobori T."/>
        </authorList>
    </citation>
    <scope>NUCLEOTIDE SEQUENCE [LARGE SCALE GENOMIC DNA]</scope>
    <source>
        <strain>cv. Nipponbare</strain>
    </source>
</reference>
<reference key="2">
    <citation type="journal article" date="2005" name="Nature">
        <title>The map-based sequence of the rice genome.</title>
        <authorList>
            <consortium name="International rice genome sequencing project (IRGSP)"/>
        </authorList>
    </citation>
    <scope>NUCLEOTIDE SEQUENCE [LARGE SCALE GENOMIC DNA]</scope>
    <source>
        <strain>cv. Nipponbare</strain>
    </source>
</reference>
<reference key="3">
    <citation type="journal article" date="2008" name="Nucleic Acids Res.">
        <title>The rice annotation project database (RAP-DB): 2008 update.</title>
        <authorList>
            <consortium name="The rice annotation project (RAP)"/>
        </authorList>
    </citation>
    <scope>GENOME REANNOTATION</scope>
    <source>
        <strain>cv. Nipponbare</strain>
    </source>
</reference>
<reference key="4">
    <citation type="journal article" date="2013" name="Rice">
        <title>Improvement of the Oryza sativa Nipponbare reference genome using next generation sequence and optical map data.</title>
        <authorList>
            <person name="Kawahara Y."/>
            <person name="de la Bastide M."/>
            <person name="Hamilton J.P."/>
            <person name="Kanamori H."/>
            <person name="McCombie W.R."/>
            <person name="Ouyang S."/>
            <person name="Schwartz D.C."/>
            <person name="Tanaka T."/>
            <person name="Wu J."/>
            <person name="Zhou S."/>
            <person name="Childs K.L."/>
            <person name="Davidson R.M."/>
            <person name="Lin H."/>
            <person name="Quesada-Ocampo L."/>
            <person name="Vaillancourt B."/>
            <person name="Sakai H."/>
            <person name="Lee S.S."/>
            <person name="Kim J."/>
            <person name="Numa H."/>
            <person name="Itoh T."/>
            <person name="Buell C.R."/>
            <person name="Matsumoto T."/>
        </authorList>
    </citation>
    <scope>GENOME REANNOTATION</scope>
    <source>
        <strain>cv. Nipponbare</strain>
    </source>
</reference>
<reference key="5">
    <citation type="journal article" date="2005" name="PLoS Biol.">
        <title>The genomes of Oryza sativa: a history of duplications.</title>
        <authorList>
            <person name="Yu J."/>
            <person name="Wang J."/>
            <person name="Lin W."/>
            <person name="Li S."/>
            <person name="Li H."/>
            <person name="Zhou J."/>
            <person name="Ni P."/>
            <person name="Dong W."/>
            <person name="Hu S."/>
            <person name="Zeng C."/>
            <person name="Zhang J."/>
            <person name="Zhang Y."/>
            <person name="Li R."/>
            <person name="Xu Z."/>
            <person name="Li S."/>
            <person name="Li X."/>
            <person name="Zheng H."/>
            <person name="Cong L."/>
            <person name="Lin L."/>
            <person name="Yin J."/>
            <person name="Geng J."/>
            <person name="Li G."/>
            <person name="Shi J."/>
            <person name="Liu J."/>
            <person name="Lv H."/>
            <person name="Li J."/>
            <person name="Wang J."/>
            <person name="Deng Y."/>
            <person name="Ran L."/>
            <person name="Shi X."/>
            <person name="Wang X."/>
            <person name="Wu Q."/>
            <person name="Li C."/>
            <person name="Ren X."/>
            <person name="Wang J."/>
            <person name="Wang X."/>
            <person name="Li D."/>
            <person name="Liu D."/>
            <person name="Zhang X."/>
            <person name="Ji Z."/>
            <person name="Zhao W."/>
            <person name="Sun Y."/>
            <person name="Zhang Z."/>
            <person name="Bao J."/>
            <person name="Han Y."/>
            <person name="Dong L."/>
            <person name="Ji J."/>
            <person name="Chen P."/>
            <person name="Wu S."/>
            <person name="Liu J."/>
            <person name="Xiao Y."/>
            <person name="Bu D."/>
            <person name="Tan J."/>
            <person name="Yang L."/>
            <person name="Ye C."/>
            <person name="Zhang J."/>
            <person name="Xu J."/>
            <person name="Zhou Y."/>
            <person name="Yu Y."/>
            <person name="Zhang B."/>
            <person name="Zhuang S."/>
            <person name="Wei H."/>
            <person name="Liu B."/>
            <person name="Lei M."/>
            <person name="Yu H."/>
            <person name="Li Y."/>
            <person name="Xu H."/>
            <person name="Wei S."/>
            <person name="He X."/>
            <person name="Fang L."/>
            <person name="Zhang Z."/>
            <person name="Zhang Y."/>
            <person name="Huang X."/>
            <person name="Su Z."/>
            <person name="Tong W."/>
            <person name="Li J."/>
            <person name="Tong Z."/>
            <person name="Li S."/>
            <person name="Ye J."/>
            <person name="Wang L."/>
            <person name="Fang L."/>
            <person name="Lei T."/>
            <person name="Chen C.-S."/>
            <person name="Chen H.-C."/>
            <person name="Xu Z."/>
            <person name="Li H."/>
            <person name="Huang H."/>
            <person name="Zhang F."/>
            <person name="Xu H."/>
            <person name="Li N."/>
            <person name="Zhao C."/>
            <person name="Li S."/>
            <person name="Dong L."/>
            <person name="Huang Y."/>
            <person name="Li L."/>
            <person name="Xi Y."/>
            <person name="Qi Q."/>
            <person name="Li W."/>
            <person name="Zhang B."/>
            <person name="Hu W."/>
            <person name="Zhang Y."/>
            <person name="Tian X."/>
            <person name="Jiao Y."/>
            <person name="Liang X."/>
            <person name="Jin J."/>
            <person name="Gao L."/>
            <person name="Zheng W."/>
            <person name="Hao B."/>
            <person name="Liu S.-M."/>
            <person name="Wang W."/>
            <person name="Yuan L."/>
            <person name="Cao M."/>
            <person name="McDermott J."/>
            <person name="Samudrala R."/>
            <person name="Wang J."/>
            <person name="Wong G.K.-S."/>
            <person name="Yang H."/>
        </authorList>
    </citation>
    <scope>NUCLEOTIDE SEQUENCE [LARGE SCALE GENOMIC DNA]</scope>
    <source>
        <strain>cv. Nipponbare</strain>
    </source>
</reference>
<reference key="6">
    <citation type="journal article" date="2003" name="Science">
        <title>Collection, mapping, and annotation of over 28,000 cDNA clones from japonica rice.</title>
        <authorList>
            <consortium name="The rice full-length cDNA consortium"/>
        </authorList>
    </citation>
    <scope>NUCLEOTIDE SEQUENCE [LARGE SCALE MRNA]</scope>
    <source>
        <strain>cv. Nipponbare</strain>
    </source>
</reference>
<evidence type="ECO:0000250" key="1"/>
<evidence type="ECO:0000255" key="2"/>
<evidence type="ECO:0000305" key="3"/>
<proteinExistence type="evidence at transcript level"/>